<sequence>MKLIAAVLAGGKSRRFGEDKLLFEINGKPLILHTIDRLEKCNLIKRVVIVASSHNEKVMREFGYEVIVDELEIGPISGLYSALSLGEVLVVGGDMPSLIPEFIDYIIKEFNNSRKIACVPRWSNGYLEPLHAAYSREFREILGERIRKGKYKLGDAIREIPNVCYISIEKLPVEWRESFFNVNRKEDLHIIT</sequence>
<organism>
    <name type="scientific">Pyrococcus horikoshii (strain ATCC 700860 / DSM 12428 / JCM 9974 / NBRC 100139 / OT-3)</name>
    <dbReference type="NCBI Taxonomy" id="70601"/>
    <lineage>
        <taxon>Archaea</taxon>
        <taxon>Methanobacteriati</taxon>
        <taxon>Methanobacteriota</taxon>
        <taxon>Thermococci</taxon>
        <taxon>Thermococcales</taxon>
        <taxon>Thermococcaceae</taxon>
        <taxon>Pyrococcus</taxon>
    </lineage>
</organism>
<comment type="function">
    <text evidence="1">Transfers a GMP moiety from GTP to Mo-molybdopterin (Mo-MPT) cofactor (Moco or molybdenum cofactor) to form Mo-molybdopterin guanine dinucleotide (Mo-MGD) cofactor.</text>
</comment>
<comment type="catalytic activity">
    <reaction evidence="1">
        <text>Mo-molybdopterin + GTP + H(+) = Mo-molybdopterin guanine dinucleotide + diphosphate</text>
        <dbReference type="Rhea" id="RHEA:34243"/>
        <dbReference type="ChEBI" id="CHEBI:15378"/>
        <dbReference type="ChEBI" id="CHEBI:33019"/>
        <dbReference type="ChEBI" id="CHEBI:37565"/>
        <dbReference type="ChEBI" id="CHEBI:71302"/>
        <dbReference type="ChEBI" id="CHEBI:71310"/>
        <dbReference type="EC" id="2.7.7.77"/>
    </reaction>
</comment>
<comment type="cofactor">
    <cofactor evidence="1">
        <name>Mg(2+)</name>
        <dbReference type="ChEBI" id="CHEBI:18420"/>
    </cofactor>
</comment>
<comment type="subcellular location">
    <subcellularLocation>
        <location evidence="1">Cytoplasm</location>
    </subcellularLocation>
</comment>
<comment type="domain">
    <text evidence="1">The N-terminal domain determines nucleotide recognition and specific binding, while the C-terminal domain determines the specific binding to the target protein.</text>
</comment>
<comment type="similarity">
    <text evidence="1">Belongs to the MobA family.</text>
</comment>
<proteinExistence type="inferred from homology"/>
<name>MOBA_PYRHO</name>
<feature type="chain" id="PRO_0000134933" description="Probable molybdenum cofactor guanylyltransferase">
    <location>
        <begin position="1"/>
        <end position="192"/>
    </location>
</feature>
<feature type="binding site" evidence="1">
    <location>
        <begin position="8"/>
        <end position="10"/>
    </location>
    <ligand>
        <name>GTP</name>
        <dbReference type="ChEBI" id="CHEBI:37565"/>
    </ligand>
</feature>
<feature type="binding site" evidence="1">
    <location>
        <position position="20"/>
    </location>
    <ligand>
        <name>GTP</name>
        <dbReference type="ChEBI" id="CHEBI:37565"/>
    </ligand>
</feature>
<feature type="binding site" evidence="1">
    <location>
        <position position="69"/>
    </location>
    <ligand>
        <name>GTP</name>
        <dbReference type="ChEBI" id="CHEBI:37565"/>
    </ligand>
</feature>
<feature type="binding site" evidence="1">
    <location>
        <position position="94"/>
    </location>
    <ligand>
        <name>GTP</name>
        <dbReference type="ChEBI" id="CHEBI:37565"/>
    </ligand>
</feature>
<feature type="binding site" evidence="1">
    <location>
        <position position="94"/>
    </location>
    <ligand>
        <name>Mg(2+)</name>
        <dbReference type="ChEBI" id="CHEBI:18420"/>
    </ligand>
</feature>
<protein>
    <recommendedName>
        <fullName evidence="1">Probable molybdenum cofactor guanylyltransferase</fullName>
        <shortName evidence="1">MoCo guanylyltransferase</shortName>
        <ecNumber evidence="1">2.7.7.77</ecNumber>
    </recommendedName>
    <alternativeName>
        <fullName evidence="1">GTP:molybdopterin guanylyltransferase</fullName>
    </alternativeName>
    <alternativeName>
        <fullName evidence="1">Mo-MPT guanylyltransferase</fullName>
    </alternativeName>
    <alternativeName>
        <fullName evidence="1">Molybdopterin guanylyltransferase</fullName>
    </alternativeName>
    <alternativeName>
        <fullName evidence="1">Molybdopterin-guanine dinucleotide synthase</fullName>
        <shortName evidence="1">MGD synthase</shortName>
    </alternativeName>
</protein>
<dbReference type="EC" id="2.7.7.77" evidence="1"/>
<dbReference type="EMBL" id="BA000001">
    <property type="protein sequence ID" value="BAA30077.1"/>
    <property type="molecule type" value="Genomic_DNA"/>
</dbReference>
<dbReference type="PIR" id="G71089">
    <property type="entry name" value="G71089"/>
</dbReference>
<dbReference type="RefSeq" id="WP_010885070.1">
    <property type="nucleotide sequence ID" value="NC_000961.1"/>
</dbReference>
<dbReference type="SMR" id="O58708"/>
<dbReference type="STRING" id="70601.gene:9377935"/>
<dbReference type="EnsemblBacteria" id="BAA30077">
    <property type="protein sequence ID" value="BAA30077"/>
    <property type="gene ID" value="BAA30077"/>
</dbReference>
<dbReference type="GeneID" id="1443305"/>
<dbReference type="KEGG" id="pho:PH0980"/>
<dbReference type="eggNOG" id="arCOG01872">
    <property type="taxonomic scope" value="Archaea"/>
</dbReference>
<dbReference type="OrthoDB" id="28434at2157"/>
<dbReference type="Proteomes" id="UP000000752">
    <property type="component" value="Chromosome"/>
</dbReference>
<dbReference type="GO" id="GO:0005737">
    <property type="term" value="C:cytoplasm"/>
    <property type="evidence" value="ECO:0007669"/>
    <property type="project" value="UniProtKB-SubCell"/>
</dbReference>
<dbReference type="GO" id="GO:0005525">
    <property type="term" value="F:GTP binding"/>
    <property type="evidence" value="ECO:0007669"/>
    <property type="project" value="UniProtKB-UniRule"/>
</dbReference>
<dbReference type="GO" id="GO:0046872">
    <property type="term" value="F:metal ion binding"/>
    <property type="evidence" value="ECO:0007669"/>
    <property type="project" value="UniProtKB-KW"/>
</dbReference>
<dbReference type="GO" id="GO:0061603">
    <property type="term" value="F:molybdenum cofactor guanylyltransferase activity"/>
    <property type="evidence" value="ECO:0007669"/>
    <property type="project" value="UniProtKB-EC"/>
</dbReference>
<dbReference type="GO" id="GO:0006777">
    <property type="term" value="P:Mo-molybdopterin cofactor biosynthetic process"/>
    <property type="evidence" value="ECO:0007669"/>
    <property type="project" value="UniProtKB-KW"/>
</dbReference>
<dbReference type="CDD" id="cd02503">
    <property type="entry name" value="MobA"/>
    <property type="match status" value="1"/>
</dbReference>
<dbReference type="Gene3D" id="3.90.550.10">
    <property type="entry name" value="Spore Coat Polysaccharide Biosynthesis Protein SpsA, Chain A"/>
    <property type="match status" value="1"/>
</dbReference>
<dbReference type="HAMAP" id="MF_00316">
    <property type="entry name" value="MobA"/>
    <property type="match status" value="1"/>
</dbReference>
<dbReference type="InterPro" id="IPR025877">
    <property type="entry name" value="MobA-like_NTP_Trfase"/>
</dbReference>
<dbReference type="InterPro" id="IPR013482">
    <property type="entry name" value="Molybde_CF_guanTrfase"/>
</dbReference>
<dbReference type="InterPro" id="IPR029044">
    <property type="entry name" value="Nucleotide-diphossugar_trans"/>
</dbReference>
<dbReference type="NCBIfam" id="NF001457">
    <property type="entry name" value="PRK00317.1-3"/>
    <property type="match status" value="1"/>
</dbReference>
<dbReference type="PANTHER" id="PTHR19136">
    <property type="entry name" value="MOLYBDENUM COFACTOR GUANYLYLTRANSFERASE"/>
    <property type="match status" value="1"/>
</dbReference>
<dbReference type="PANTHER" id="PTHR19136:SF81">
    <property type="entry name" value="MOLYBDENUM COFACTOR GUANYLYLTRANSFERASE"/>
    <property type="match status" value="1"/>
</dbReference>
<dbReference type="Pfam" id="PF12804">
    <property type="entry name" value="NTP_transf_3"/>
    <property type="match status" value="1"/>
</dbReference>
<dbReference type="SUPFAM" id="SSF53448">
    <property type="entry name" value="Nucleotide-diphospho-sugar transferases"/>
    <property type="match status" value="1"/>
</dbReference>
<keyword id="KW-0963">Cytoplasm</keyword>
<keyword id="KW-0342">GTP-binding</keyword>
<keyword id="KW-0460">Magnesium</keyword>
<keyword id="KW-0479">Metal-binding</keyword>
<keyword id="KW-0501">Molybdenum cofactor biosynthesis</keyword>
<keyword id="KW-0547">Nucleotide-binding</keyword>
<keyword id="KW-0808">Transferase</keyword>
<gene>
    <name evidence="1" type="primary">mobA</name>
    <name type="ordered locus">PH0980</name>
</gene>
<evidence type="ECO:0000255" key="1">
    <source>
        <dbReference type="HAMAP-Rule" id="MF_00316"/>
    </source>
</evidence>
<reference key="1">
    <citation type="journal article" date="1998" name="DNA Res.">
        <title>Complete sequence and gene organization of the genome of a hyper-thermophilic archaebacterium, Pyrococcus horikoshii OT3.</title>
        <authorList>
            <person name="Kawarabayasi Y."/>
            <person name="Sawada M."/>
            <person name="Horikawa H."/>
            <person name="Haikawa Y."/>
            <person name="Hino Y."/>
            <person name="Yamamoto S."/>
            <person name="Sekine M."/>
            <person name="Baba S."/>
            <person name="Kosugi H."/>
            <person name="Hosoyama A."/>
            <person name="Nagai Y."/>
            <person name="Sakai M."/>
            <person name="Ogura K."/>
            <person name="Otsuka R."/>
            <person name="Nakazawa H."/>
            <person name="Takamiya M."/>
            <person name="Ohfuku Y."/>
            <person name="Funahashi T."/>
            <person name="Tanaka T."/>
            <person name="Kudoh Y."/>
            <person name="Yamazaki J."/>
            <person name="Kushida N."/>
            <person name="Oguchi A."/>
            <person name="Aoki K."/>
            <person name="Yoshizawa T."/>
            <person name="Nakamura Y."/>
            <person name="Robb F.T."/>
            <person name="Horikoshi K."/>
            <person name="Masuchi Y."/>
            <person name="Shizuya H."/>
            <person name="Kikuchi H."/>
        </authorList>
    </citation>
    <scope>NUCLEOTIDE SEQUENCE [LARGE SCALE GENOMIC DNA]</scope>
    <source>
        <strain>ATCC 700860 / DSM 12428 / JCM 9974 / NBRC 100139 / OT-3</strain>
    </source>
</reference>
<accession>O58708</accession>